<gene>
    <name evidence="1" type="primary">mutS</name>
    <name type="ordered locus">CD630_19770</name>
</gene>
<reference key="1">
    <citation type="journal article" date="2006" name="Nat. Genet.">
        <title>The multidrug-resistant human pathogen Clostridium difficile has a highly mobile, mosaic genome.</title>
        <authorList>
            <person name="Sebaihia M."/>
            <person name="Wren B.W."/>
            <person name="Mullany P."/>
            <person name="Fairweather N.F."/>
            <person name="Minton N."/>
            <person name="Stabler R."/>
            <person name="Thomson N.R."/>
            <person name="Roberts A.P."/>
            <person name="Cerdeno-Tarraga A.M."/>
            <person name="Wang H."/>
            <person name="Holden M.T.G."/>
            <person name="Wright A."/>
            <person name="Churcher C."/>
            <person name="Quail M.A."/>
            <person name="Baker S."/>
            <person name="Bason N."/>
            <person name="Brooks K."/>
            <person name="Chillingworth T."/>
            <person name="Cronin A."/>
            <person name="Davis P."/>
            <person name="Dowd L."/>
            <person name="Fraser A."/>
            <person name="Feltwell T."/>
            <person name="Hance Z."/>
            <person name="Holroyd S."/>
            <person name="Jagels K."/>
            <person name="Moule S."/>
            <person name="Mungall K."/>
            <person name="Price C."/>
            <person name="Rabbinowitsch E."/>
            <person name="Sharp S."/>
            <person name="Simmonds M."/>
            <person name="Stevens K."/>
            <person name="Unwin L."/>
            <person name="Whithead S."/>
            <person name="Dupuy B."/>
            <person name="Dougan G."/>
            <person name="Barrell B."/>
            <person name="Parkhill J."/>
        </authorList>
    </citation>
    <scope>NUCLEOTIDE SEQUENCE [LARGE SCALE GENOMIC DNA]</scope>
    <source>
        <strain>630</strain>
    </source>
</reference>
<sequence>MQIDMNKLTPMMKQYLEVKNRYKDCILFFRLGDFYEMFFEDALVASKALEIALTGKACGLEERAPMCGVPFHSANSYISKLVENGYKVAIGEQMEDPSTAKGIVRREVIRVITPGTVLDGNLLENKKNNYLLSLYKDGTNIGLTYVDISTGETNATCLNEDKVIEEIAKIHPTEIIINDLDFIEKLRDIATVSNIYINESFSDNYLDINILKEYFPDVYLQKLKFDDKGLIKSSLSILLNYIYNTQKQITSNINNINIYNSSEYMVLDMFTRTNLELTQTIRGNKKKGSLLHVLDKTSTAMGGRLLRKYVEEPLINKSKIENRLDVIEEIKDDFILREDLNDILKNIYDIERICGKIAFERVTPKELIHLKNSIEKLPNLKDTINLSNAKILKEYVSEMDKLDDIYNLIDEAILEEPTITIKDGNIIKSDFSDELKELREISKNGAFLVKEIENREREKTGVKSLKIGFNKVFGYYIEITKANFKQAKLDETYIRKQTLSNAERYITPELKEIEEKILHAEEKIKSLEYEIFVEIRDTIYKNIDRIQKVAKTIANIDVFVSLATVAHINNYVKPAINENNKLDIRNGRHPVVENIVGEENFVPNDTYLNRGENIINIITGPNMSGKSTYMRQTAIIALMAHIGSFVPAESADIPILDRIFTRVGASDDLSQGQSTFMVEMNEVSLILKNATERSLVILDEIGRGTSTYDGISLAWSIVEYIQKNIRCKTLFATHYHELTDLEEEFKEVKNYSIAVKEDGEGIIFLRKIIPQGADKSYGIYVAKLAKLPDEVIERAKYILKDLEKNHVYNSVAINGDKENNNIINSNLDEELVKVNQSNFKNKYESLKIEHELIVKDYKHIKKDYDKLNSKFKALNDEVALMKQNDDKEKINQEDSVKEVALTQISFDSVNRDILSEEILNLDILNMTPLDAINSLYNLQRKAKEIKS</sequence>
<keyword id="KW-0067">ATP-binding</keyword>
<keyword id="KW-0227">DNA damage</keyword>
<keyword id="KW-0234">DNA repair</keyword>
<keyword id="KW-0238">DNA-binding</keyword>
<keyword id="KW-0547">Nucleotide-binding</keyword>
<keyword id="KW-1185">Reference proteome</keyword>
<protein>
    <recommendedName>
        <fullName evidence="1">DNA mismatch repair protein MutS</fullName>
    </recommendedName>
</protein>
<dbReference type="EMBL" id="AM180355">
    <property type="protein sequence ID" value="CAJ68852.2"/>
    <property type="molecule type" value="Genomic_DNA"/>
</dbReference>
<dbReference type="RefSeq" id="WP_003435264.1">
    <property type="nucleotide sequence ID" value="NZ_JAUPES010000034.1"/>
</dbReference>
<dbReference type="RefSeq" id="YP_001088483.2">
    <property type="nucleotide sequence ID" value="NC_009089.1"/>
</dbReference>
<dbReference type="SMR" id="Q187T6"/>
<dbReference type="STRING" id="272563.CD630_19770"/>
<dbReference type="EnsemblBacteria" id="CAJ68852">
    <property type="protein sequence ID" value="CAJ68852"/>
    <property type="gene ID" value="CD630_19770"/>
</dbReference>
<dbReference type="KEGG" id="cdf:CD630_19770"/>
<dbReference type="KEGG" id="pdc:CDIF630_02182"/>
<dbReference type="PATRIC" id="fig|272563.120.peg.2074"/>
<dbReference type="eggNOG" id="COG0249">
    <property type="taxonomic scope" value="Bacteria"/>
</dbReference>
<dbReference type="OrthoDB" id="9802448at2"/>
<dbReference type="PhylomeDB" id="Q187T6"/>
<dbReference type="BioCyc" id="PDIF272563:G12WB-2119-MONOMER"/>
<dbReference type="Proteomes" id="UP000001978">
    <property type="component" value="Chromosome"/>
</dbReference>
<dbReference type="GO" id="GO:0005829">
    <property type="term" value="C:cytosol"/>
    <property type="evidence" value="ECO:0007669"/>
    <property type="project" value="TreeGrafter"/>
</dbReference>
<dbReference type="GO" id="GO:0005524">
    <property type="term" value="F:ATP binding"/>
    <property type="evidence" value="ECO:0007669"/>
    <property type="project" value="UniProtKB-UniRule"/>
</dbReference>
<dbReference type="GO" id="GO:0140664">
    <property type="term" value="F:ATP-dependent DNA damage sensor activity"/>
    <property type="evidence" value="ECO:0007669"/>
    <property type="project" value="InterPro"/>
</dbReference>
<dbReference type="GO" id="GO:0003684">
    <property type="term" value="F:damaged DNA binding"/>
    <property type="evidence" value="ECO:0007669"/>
    <property type="project" value="UniProtKB-UniRule"/>
</dbReference>
<dbReference type="GO" id="GO:0030983">
    <property type="term" value="F:mismatched DNA binding"/>
    <property type="evidence" value="ECO:0007669"/>
    <property type="project" value="InterPro"/>
</dbReference>
<dbReference type="GO" id="GO:0006298">
    <property type="term" value="P:mismatch repair"/>
    <property type="evidence" value="ECO:0007669"/>
    <property type="project" value="UniProtKB-UniRule"/>
</dbReference>
<dbReference type="CDD" id="cd03284">
    <property type="entry name" value="ABC_MutS1"/>
    <property type="match status" value="1"/>
</dbReference>
<dbReference type="FunFam" id="1.10.1420.10:FF:000001">
    <property type="entry name" value="DNA mismatch repair protein MutS"/>
    <property type="match status" value="1"/>
</dbReference>
<dbReference type="FunFam" id="3.40.1170.10:FF:000001">
    <property type="entry name" value="DNA mismatch repair protein MutS"/>
    <property type="match status" value="1"/>
</dbReference>
<dbReference type="FunFam" id="3.40.50.300:FF:000870">
    <property type="entry name" value="MutS protein homolog 4"/>
    <property type="match status" value="1"/>
</dbReference>
<dbReference type="Gene3D" id="1.10.1420.10">
    <property type="match status" value="2"/>
</dbReference>
<dbReference type="Gene3D" id="3.40.1170.10">
    <property type="entry name" value="DNA repair protein MutS, domain I"/>
    <property type="match status" value="1"/>
</dbReference>
<dbReference type="Gene3D" id="3.30.420.110">
    <property type="entry name" value="MutS, connector domain"/>
    <property type="match status" value="1"/>
</dbReference>
<dbReference type="Gene3D" id="3.40.50.300">
    <property type="entry name" value="P-loop containing nucleotide triphosphate hydrolases"/>
    <property type="match status" value="1"/>
</dbReference>
<dbReference type="HAMAP" id="MF_00096">
    <property type="entry name" value="MutS"/>
    <property type="match status" value="1"/>
</dbReference>
<dbReference type="InterPro" id="IPR005748">
    <property type="entry name" value="DNA_mismatch_repair_MutS"/>
</dbReference>
<dbReference type="InterPro" id="IPR007695">
    <property type="entry name" value="DNA_mismatch_repair_MutS-lik_N"/>
</dbReference>
<dbReference type="InterPro" id="IPR017261">
    <property type="entry name" value="DNA_mismatch_repair_MutS/MSH"/>
</dbReference>
<dbReference type="InterPro" id="IPR000432">
    <property type="entry name" value="DNA_mismatch_repair_MutS_C"/>
</dbReference>
<dbReference type="InterPro" id="IPR007861">
    <property type="entry name" value="DNA_mismatch_repair_MutS_clamp"/>
</dbReference>
<dbReference type="InterPro" id="IPR007696">
    <property type="entry name" value="DNA_mismatch_repair_MutS_core"/>
</dbReference>
<dbReference type="InterPro" id="IPR016151">
    <property type="entry name" value="DNA_mismatch_repair_MutS_N"/>
</dbReference>
<dbReference type="InterPro" id="IPR036187">
    <property type="entry name" value="DNA_mismatch_repair_MutS_sf"/>
</dbReference>
<dbReference type="InterPro" id="IPR007860">
    <property type="entry name" value="DNA_mmatch_repair_MutS_con_dom"/>
</dbReference>
<dbReference type="InterPro" id="IPR045076">
    <property type="entry name" value="MutS"/>
</dbReference>
<dbReference type="InterPro" id="IPR036678">
    <property type="entry name" value="MutS_con_dom_sf"/>
</dbReference>
<dbReference type="InterPro" id="IPR027417">
    <property type="entry name" value="P-loop_NTPase"/>
</dbReference>
<dbReference type="NCBIfam" id="TIGR01070">
    <property type="entry name" value="mutS1"/>
    <property type="match status" value="1"/>
</dbReference>
<dbReference type="NCBIfam" id="NF003810">
    <property type="entry name" value="PRK05399.1"/>
    <property type="match status" value="1"/>
</dbReference>
<dbReference type="PANTHER" id="PTHR11361:SF34">
    <property type="entry name" value="DNA MISMATCH REPAIR PROTEIN MSH1, MITOCHONDRIAL"/>
    <property type="match status" value="1"/>
</dbReference>
<dbReference type="PANTHER" id="PTHR11361">
    <property type="entry name" value="DNA MISMATCH REPAIR PROTEIN MUTS FAMILY MEMBER"/>
    <property type="match status" value="1"/>
</dbReference>
<dbReference type="Pfam" id="PF01624">
    <property type="entry name" value="MutS_I"/>
    <property type="match status" value="1"/>
</dbReference>
<dbReference type="Pfam" id="PF05188">
    <property type="entry name" value="MutS_II"/>
    <property type="match status" value="1"/>
</dbReference>
<dbReference type="Pfam" id="PF05192">
    <property type="entry name" value="MutS_III"/>
    <property type="match status" value="1"/>
</dbReference>
<dbReference type="Pfam" id="PF05190">
    <property type="entry name" value="MutS_IV"/>
    <property type="match status" value="1"/>
</dbReference>
<dbReference type="Pfam" id="PF00488">
    <property type="entry name" value="MutS_V"/>
    <property type="match status" value="1"/>
</dbReference>
<dbReference type="PIRSF" id="PIRSF037677">
    <property type="entry name" value="DNA_mis_repair_Msh6"/>
    <property type="match status" value="1"/>
</dbReference>
<dbReference type="SMART" id="SM00534">
    <property type="entry name" value="MUTSac"/>
    <property type="match status" value="1"/>
</dbReference>
<dbReference type="SMART" id="SM00533">
    <property type="entry name" value="MUTSd"/>
    <property type="match status" value="1"/>
</dbReference>
<dbReference type="SUPFAM" id="SSF55271">
    <property type="entry name" value="DNA repair protein MutS, domain I"/>
    <property type="match status" value="1"/>
</dbReference>
<dbReference type="SUPFAM" id="SSF53150">
    <property type="entry name" value="DNA repair protein MutS, domain II"/>
    <property type="match status" value="1"/>
</dbReference>
<dbReference type="SUPFAM" id="SSF48334">
    <property type="entry name" value="DNA repair protein MutS, domain III"/>
    <property type="match status" value="1"/>
</dbReference>
<dbReference type="SUPFAM" id="SSF52540">
    <property type="entry name" value="P-loop containing nucleoside triphosphate hydrolases"/>
    <property type="match status" value="1"/>
</dbReference>
<dbReference type="PROSITE" id="PS00486">
    <property type="entry name" value="DNA_MISMATCH_REPAIR_2"/>
    <property type="match status" value="1"/>
</dbReference>
<organism>
    <name type="scientific">Clostridioides difficile (strain 630)</name>
    <name type="common">Peptoclostridium difficile</name>
    <dbReference type="NCBI Taxonomy" id="272563"/>
    <lineage>
        <taxon>Bacteria</taxon>
        <taxon>Bacillati</taxon>
        <taxon>Bacillota</taxon>
        <taxon>Clostridia</taxon>
        <taxon>Peptostreptococcales</taxon>
        <taxon>Peptostreptococcaceae</taxon>
        <taxon>Clostridioides</taxon>
    </lineage>
</organism>
<accession>Q187T6</accession>
<comment type="function">
    <text evidence="1">This protein is involved in the repair of mismatches in DNA. It is possible that it carries out the mismatch recognition step. This protein has a weak ATPase activity.</text>
</comment>
<comment type="similarity">
    <text evidence="1">Belongs to the DNA mismatch repair MutS family.</text>
</comment>
<proteinExistence type="inferred from homology"/>
<evidence type="ECO:0000255" key="1">
    <source>
        <dbReference type="HAMAP-Rule" id="MF_00096"/>
    </source>
</evidence>
<feature type="chain" id="PRO_0000335142" description="DNA mismatch repair protein MutS">
    <location>
        <begin position="1"/>
        <end position="947"/>
    </location>
</feature>
<feature type="binding site" evidence="1">
    <location>
        <begin position="620"/>
        <end position="627"/>
    </location>
    <ligand>
        <name>ATP</name>
        <dbReference type="ChEBI" id="CHEBI:30616"/>
    </ligand>
</feature>
<name>MUTS_CLOD6</name>